<comment type="function">
    <text evidence="1 3 6 7 8 9 11 12 13 14">Catalytic component of METTL1-WDR4 methyltransferase complex that mediates the formation of N(7)-methylguanine in a subset of RNA species, such as tRNAs, mRNAs and microRNAs (miRNAs) (PubMed:12403464, PubMed:31031083, PubMed:31031084, PubMed:36599982, PubMed:36599985, PubMed:37369656, PubMed:37379838). Catalyzes the formation of N(7)-methylguanine at position 46 (m7G46) in a large subset of tRNAs that contain the 5'-RAGGU-3' motif within the variable loop (PubMed:12403464, PubMed:34352206, PubMed:34352207, PubMed:36599982, PubMed:36599985, PubMed:37369656). M7G46 interacts with C13-G22 in the D-loop to stabilize tRNA tertiary structure and protect tRNAs from decay (PubMed:36599982, PubMed:36599985). Also acts as a methyltransferase for a subset of internal N(7)-methylguanine in mRNAs (PubMed:31031084, PubMed:37379838). Internal N(7)-methylguanine methylation of mRNAs in response to stress promotes their relocalization to stress granules, thereby suppressing their translation (PubMed:31031084, PubMed:37379838). Also methylates a specific subset of miRNAs, such as let-7 (PubMed:31031083). N(7)-methylguanine methylation of let-7 miRNA promotes let-7 miRNA processing by disrupting an inhibitory secondary structure within the primary miRNA transcript (pri-miRNA) (PubMed:31031083). Acts as a regulator of embryonic stem cell self-renewal and differentiation (By similarity).</text>
</comment>
<comment type="catalytic activity">
    <reaction evidence="1 8 9 11 12 13">
        <text>guanosine(46) in tRNA + S-adenosyl-L-methionine = N(7)-methylguanosine(46) in tRNA + S-adenosyl-L-homocysteine</text>
        <dbReference type="Rhea" id="RHEA:42708"/>
        <dbReference type="Rhea" id="RHEA-COMP:10188"/>
        <dbReference type="Rhea" id="RHEA-COMP:10189"/>
        <dbReference type="ChEBI" id="CHEBI:57856"/>
        <dbReference type="ChEBI" id="CHEBI:59789"/>
        <dbReference type="ChEBI" id="CHEBI:74269"/>
        <dbReference type="ChEBI" id="CHEBI:74480"/>
        <dbReference type="EC" id="2.1.1.33"/>
    </reaction>
</comment>
<comment type="catalytic activity">
    <reaction evidence="7 14">
        <text>a guanosine in mRNA + S-adenosyl-L-methionine = an N(7)-methylguanosine in mRNA + S-adenosyl-L-homocysteine</text>
        <dbReference type="Rhea" id="RHEA:60508"/>
        <dbReference type="Rhea" id="RHEA-COMP:15584"/>
        <dbReference type="Rhea" id="RHEA-COMP:15585"/>
        <dbReference type="ChEBI" id="CHEBI:57856"/>
        <dbReference type="ChEBI" id="CHEBI:59789"/>
        <dbReference type="ChEBI" id="CHEBI:74269"/>
        <dbReference type="ChEBI" id="CHEBI:74480"/>
    </reaction>
    <physiologicalReaction direction="left-to-right" evidence="7 14">
        <dbReference type="Rhea" id="RHEA:60509"/>
    </physiologicalReaction>
</comment>
<comment type="catalytic activity">
    <reaction evidence="6">
        <text>a guanosine in miRNA + S-adenosyl-L-methionine = an N(7)-methylguanosine in miRNA + S-adenosyl-L-homocysteine</text>
        <dbReference type="Rhea" id="RHEA:60512"/>
        <dbReference type="Rhea" id="RHEA-COMP:15587"/>
        <dbReference type="Rhea" id="RHEA-COMP:15588"/>
        <dbReference type="ChEBI" id="CHEBI:57856"/>
        <dbReference type="ChEBI" id="CHEBI:59789"/>
        <dbReference type="ChEBI" id="CHEBI:74269"/>
        <dbReference type="ChEBI" id="CHEBI:74480"/>
    </reaction>
    <physiologicalReaction direction="left-to-right" evidence="6">
        <dbReference type="Rhea" id="RHEA:60513"/>
    </physiologicalReaction>
</comment>
<comment type="pathway">
    <text evidence="3 11 12 13">tRNA modification; N(7)-methylguanine-tRNA biosynthesis.</text>
</comment>
<comment type="subunit">
    <text evidence="3 4 11 12 13 14">Catalytic component of the METTL1-WDR4 complex, composed of METTL1 and WDR4.</text>
</comment>
<comment type="interaction">
    <interactant intactId="EBI-750415">
        <id>Q9UBP6</id>
    </interactant>
    <interactant intactId="EBI-750427">
        <id>P57081</id>
        <label>WDR4</label>
    </interactant>
    <organismsDiffer>false</organismsDiffer>
    <experiments>15</experiments>
</comment>
<comment type="subcellular location">
    <subcellularLocation>
        <location evidence="4 5">Nucleus</location>
    </subcellularLocation>
</comment>
<comment type="alternative products">
    <event type="alternative splicing"/>
    <isoform>
        <id>Q9UBP6-1</id>
        <name>1</name>
        <sequence type="displayed"/>
    </isoform>
    <isoform>
        <id>Q9UBP6-2</id>
        <name>2</name>
        <sequence type="described" ref="VSP_044671 VSP_044672"/>
    </isoform>
</comment>
<comment type="tissue specificity">
    <text evidence="2">Ubiquitous.</text>
</comment>
<comment type="induction">
    <text evidence="8 9 10">Amplified and overexpressed in a number of cancers and is associated with poor prognosis (at protein level).</text>
</comment>
<comment type="domain">
    <text evidence="11 12">Upon tRNA-binding, the alphaC region transforms into a helix, which together with the alpha6 helix secures both ends of the tRNA variable loop (PubMed:36599985). The N-terminal disordered region is part of the catalytic pocket and essential for methyltransferase activity: upon S-adenosyl-L-methionine- and tRNA-binding, the N-terminal disordered region becomes ordered, sandwiched between the bound cofactor and the tRNA, and the WDR4 C-terminus attaches to the METTL1 N-terminus to stabilize the bound tRNA together (PubMed:36599982, PubMed:36599985). Together with WDR4, which also binds tRNAs, tRNAs undergo bending to facilitate G46 flipping into the catalytic pocket to be modified (PubMed:36599982, PubMed:36599985).</text>
</comment>
<comment type="PTM">
    <text evidence="4 12">Phosphorylation at Ser-27 by PKB/AKT1 inactivates its methyltransferase activity via a steric interference mechanism in the active site that locally disrupts the catalytic center (PubMed:15861136, PubMed:36599985). Phosphorylation at Ser-27 does not affect the interaction with WDR4 (PubMed:15861136).</text>
</comment>
<comment type="miscellaneous">
    <text evidence="8 9 10">In the context of cancer, overexpression of the METTL1-WDR4 methyltransferase complex promotes cancer progression by driving oncogenic transformation (PubMed:34352206, PubMed:34352207, PubMed:34371184). Drives oncogenesis by mediating the formation of N(7)-methylguanine at position 46 (m7G46) in some tRNAs, in particular Arg-TCT-4-1 (TRR-TCT4-1), leading to increased translation of mRNAs, including cell cycle regulators that are enriched in the corresponding AGA codon (PubMed:34352206, PubMed:34352207, PubMed:34371184).</text>
</comment>
<comment type="similarity">
    <text evidence="1">Belongs to the class I-like SAM-binding methyltransferase superfamily. TrmB family.</text>
</comment>
<comment type="sequence caution" evidence="18">
    <conflict type="erroneous initiation">
        <sequence resource="EMBL-CDS" id="CAA65470"/>
    </conflict>
</comment>
<proteinExistence type="evidence at protein level"/>
<evidence type="ECO:0000255" key="1">
    <source>
        <dbReference type="HAMAP-Rule" id="MF_03055"/>
    </source>
</evidence>
<evidence type="ECO:0000269" key="2">
    <source>
    </source>
</evidence>
<evidence type="ECO:0000269" key="3">
    <source>
    </source>
</evidence>
<evidence type="ECO:0000269" key="4">
    <source>
    </source>
</evidence>
<evidence type="ECO:0000269" key="5">
    <source>
    </source>
</evidence>
<evidence type="ECO:0000269" key="6">
    <source>
    </source>
</evidence>
<evidence type="ECO:0000269" key="7">
    <source>
    </source>
</evidence>
<evidence type="ECO:0000269" key="8">
    <source>
    </source>
</evidence>
<evidence type="ECO:0000269" key="9">
    <source>
    </source>
</evidence>
<evidence type="ECO:0000269" key="10">
    <source>
    </source>
</evidence>
<evidence type="ECO:0000269" key="11">
    <source>
    </source>
</evidence>
<evidence type="ECO:0000269" key="12">
    <source>
    </source>
</evidence>
<evidence type="ECO:0000269" key="13">
    <source>
    </source>
</evidence>
<evidence type="ECO:0000269" key="14">
    <source>
    </source>
</evidence>
<evidence type="ECO:0000269" key="15">
    <source ref="19"/>
</evidence>
<evidence type="ECO:0000303" key="16">
    <source>
    </source>
</evidence>
<evidence type="ECO:0000303" key="17">
    <source ref="3"/>
</evidence>
<evidence type="ECO:0000305" key="18"/>
<evidence type="ECO:0000305" key="19">
    <source>
    </source>
</evidence>
<evidence type="ECO:0000305" key="20">
    <source>
    </source>
</evidence>
<evidence type="ECO:0000312" key="21">
    <source>
        <dbReference type="HGNC" id="HGNC:7030"/>
    </source>
</evidence>
<evidence type="ECO:0007744" key="22">
    <source>
        <dbReference type="PDB" id="3CKK"/>
    </source>
</evidence>
<evidence type="ECO:0007744" key="23">
    <source>
        <dbReference type="PDB" id="8CTH"/>
    </source>
</evidence>
<evidence type="ECO:0007744" key="24">
    <source>
        <dbReference type="PDB" id="8D5B"/>
    </source>
</evidence>
<evidence type="ECO:0007744" key="25">
    <source>
        <dbReference type="PDB" id="8D9L"/>
    </source>
</evidence>
<evidence type="ECO:0007744" key="26">
    <source>
        <dbReference type="PDB" id="8EG0"/>
    </source>
</evidence>
<evidence type="ECO:0007744" key="27">
    <source>
    </source>
</evidence>
<evidence type="ECO:0007744" key="28">
    <source>
    </source>
</evidence>
<evidence type="ECO:0007744" key="29">
    <source>
    </source>
</evidence>
<evidence type="ECO:0007829" key="30">
    <source>
        <dbReference type="PDB" id="3CKK"/>
    </source>
</evidence>
<evidence type="ECO:0007829" key="31">
    <source>
        <dbReference type="PDB" id="7OGJ"/>
    </source>
</evidence>
<evidence type="ECO:0007829" key="32">
    <source>
        <dbReference type="PDB" id="7U20"/>
    </source>
</evidence>
<evidence type="ECO:0007829" key="33">
    <source>
        <dbReference type="PDB" id="8D58"/>
    </source>
</evidence>
<evidence type="ECO:0007829" key="34">
    <source>
        <dbReference type="PDB" id="8H0N"/>
    </source>
</evidence>
<dbReference type="EC" id="2.1.1.33" evidence="1 8 9 11 12 13"/>
<dbReference type="EC" id="2.1.1.-" evidence="7 14 6"/>
<dbReference type="EMBL" id="Y18643">
    <property type="protein sequence ID" value="CAA77239.1"/>
    <property type="molecule type" value="mRNA"/>
</dbReference>
<dbReference type="EMBL" id="Y18642">
    <property type="protein sequence ID" value="CAA77238.1"/>
    <property type="molecule type" value="Genomic_DNA"/>
</dbReference>
<dbReference type="EMBL" id="X96698">
    <property type="protein sequence ID" value="CAA65470.1"/>
    <property type="status" value="ALT_INIT"/>
    <property type="molecule type" value="mRNA"/>
</dbReference>
<dbReference type="EMBL" id="AK314851">
    <property type="protein sequence ID" value="BAG37368.1"/>
    <property type="molecule type" value="mRNA"/>
</dbReference>
<dbReference type="EMBL" id="AK223202">
    <property type="protein sequence ID" value="BAD96922.1"/>
    <property type="molecule type" value="mRNA"/>
</dbReference>
<dbReference type="EMBL" id="AC025165">
    <property type="status" value="NOT_ANNOTATED_CDS"/>
    <property type="molecule type" value="Genomic_DNA"/>
</dbReference>
<dbReference type="EMBL" id="BC000550">
    <property type="protein sequence ID" value="AAH00550.1"/>
    <property type="molecule type" value="mRNA"/>
</dbReference>
<dbReference type="CCDS" id="CCDS8955.3">
    <molecule id="Q9UBP6-1"/>
</dbReference>
<dbReference type="CCDS" id="CCDS8956.1">
    <molecule id="Q9UBP6-2"/>
</dbReference>
<dbReference type="RefSeq" id="NP_005362.3">
    <molecule id="Q9UBP6-1"/>
    <property type="nucleotide sequence ID" value="NM_005371.6"/>
</dbReference>
<dbReference type="RefSeq" id="NP_075422.3">
    <molecule id="Q9UBP6-2"/>
    <property type="nucleotide sequence ID" value="NM_023033.4"/>
</dbReference>
<dbReference type="PDB" id="3CKK">
    <property type="method" value="X-ray"/>
    <property type="resolution" value="1.55 A"/>
    <property type="chains" value="A=32-265"/>
</dbReference>
<dbReference type="PDB" id="7OGJ">
    <property type="method" value="X-ray"/>
    <property type="resolution" value="1.59 A"/>
    <property type="chains" value="A/B=32-265"/>
</dbReference>
<dbReference type="PDB" id="7PL1">
    <property type="method" value="X-ray"/>
    <property type="resolution" value="1.85 A"/>
    <property type="chains" value="A=32-265"/>
</dbReference>
<dbReference type="PDB" id="7U20">
    <property type="method" value="X-ray"/>
    <property type="resolution" value="3.10 A"/>
    <property type="chains" value="A=1-276"/>
</dbReference>
<dbReference type="PDB" id="8CTH">
    <property type="method" value="EM"/>
    <property type="resolution" value="3.30 A"/>
    <property type="chains" value="A=1-276"/>
</dbReference>
<dbReference type="PDB" id="8CTI">
    <property type="method" value="EM"/>
    <property type="resolution" value="3.60 A"/>
    <property type="chains" value="A=1-276"/>
</dbReference>
<dbReference type="PDB" id="8D58">
    <property type="method" value="X-ray"/>
    <property type="resolution" value="2.47 A"/>
    <property type="chains" value="A=20-265"/>
</dbReference>
<dbReference type="PDB" id="8D59">
    <property type="method" value="X-ray"/>
    <property type="resolution" value="2.26 A"/>
    <property type="chains" value="A=20-265"/>
</dbReference>
<dbReference type="PDB" id="8D5B">
    <property type="method" value="X-ray"/>
    <property type="resolution" value="1.93 A"/>
    <property type="chains" value="A=20-265"/>
</dbReference>
<dbReference type="PDB" id="8D9K">
    <property type="method" value="EM"/>
    <property type="resolution" value="3.72 A"/>
    <property type="chains" value="A=1-276"/>
</dbReference>
<dbReference type="PDB" id="8D9L">
    <property type="method" value="EM"/>
    <property type="resolution" value="4.04 A"/>
    <property type="chains" value="A=1-276"/>
</dbReference>
<dbReference type="PDB" id="8EG0">
    <property type="method" value="EM"/>
    <property type="resolution" value="3.53 A"/>
    <property type="chains" value="A=1-276"/>
</dbReference>
<dbReference type="PDB" id="8H0N">
    <property type="method" value="X-ray"/>
    <property type="resolution" value="1.80 A"/>
    <property type="chains" value="B=30-265"/>
</dbReference>
<dbReference type="PDBsum" id="3CKK"/>
<dbReference type="PDBsum" id="7OGJ"/>
<dbReference type="PDBsum" id="7PL1"/>
<dbReference type="PDBsum" id="7U20"/>
<dbReference type="PDBsum" id="8CTH"/>
<dbReference type="PDBsum" id="8CTI"/>
<dbReference type="PDBsum" id="8D58"/>
<dbReference type="PDBsum" id="8D59"/>
<dbReference type="PDBsum" id="8D5B"/>
<dbReference type="PDBsum" id="8D9K"/>
<dbReference type="PDBsum" id="8D9L"/>
<dbReference type="PDBsum" id="8EG0"/>
<dbReference type="PDBsum" id="8H0N"/>
<dbReference type="EMDB" id="EMD-26990"/>
<dbReference type="EMDB" id="EMD-26991"/>
<dbReference type="EMDB" id="EMD-27264"/>
<dbReference type="EMDB" id="EMD-27265"/>
<dbReference type="EMDB" id="EMD-28108"/>
<dbReference type="SMR" id="Q9UBP6"/>
<dbReference type="BioGRID" id="110392">
    <property type="interactions" value="50"/>
</dbReference>
<dbReference type="ComplexPortal" id="CPX-848">
    <property type="entry name" value="METTL1-WDR4 tRNA (guanine-N(7)-)-methyltransferase"/>
</dbReference>
<dbReference type="DIP" id="DIP-61920N"/>
<dbReference type="FunCoup" id="Q9UBP6">
    <property type="interactions" value="1559"/>
</dbReference>
<dbReference type="IntAct" id="Q9UBP6">
    <property type="interactions" value="6"/>
</dbReference>
<dbReference type="MINT" id="Q9UBP6"/>
<dbReference type="STRING" id="9606.ENSP00000314441"/>
<dbReference type="GlyGen" id="Q9UBP6">
    <property type="glycosylation" value="1 site, 1 O-linked glycan (1 site)"/>
</dbReference>
<dbReference type="iPTMnet" id="Q9UBP6"/>
<dbReference type="PhosphoSitePlus" id="Q9UBP6"/>
<dbReference type="BioMuta" id="METTL1"/>
<dbReference type="DMDM" id="32171926"/>
<dbReference type="jPOST" id="Q9UBP6"/>
<dbReference type="MassIVE" id="Q9UBP6"/>
<dbReference type="PaxDb" id="9606-ENSP00000314441"/>
<dbReference type="PeptideAtlas" id="Q9UBP6"/>
<dbReference type="ProteomicsDB" id="43260"/>
<dbReference type="ProteomicsDB" id="84026">
    <molecule id="Q9UBP6-1"/>
</dbReference>
<dbReference type="Pumba" id="Q9UBP6"/>
<dbReference type="Antibodypedia" id="16399">
    <property type="antibodies" value="173 antibodies from 29 providers"/>
</dbReference>
<dbReference type="DNASU" id="4234"/>
<dbReference type="Ensembl" id="ENST00000257848.7">
    <molecule id="Q9UBP6-2"/>
    <property type="protein sequence ID" value="ENSP00000257848.7"/>
    <property type="gene ID" value="ENSG00000037897.17"/>
</dbReference>
<dbReference type="Ensembl" id="ENST00000324871.12">
    <molecule id="Q9UBP6-1"/>
    <property type="protein sequence ID" value="ENSP00000314441.7"/>
    <property type="gene ID" value="ENSG00000037897.17"/>
</dbReference>
<dbReference type="GeneID" id="4234"/>
<dbReference type="KEGG" id="hsa:4234"/>
<dbReference type="MANE-Select" id="ENST00000324871.12">
    <property type="protein sequence ID" value="ENSP00000314441.7"/>
    <property type="RefSeq nucleotide sequence ID" value="NM_005371.6"/>
    <property type="RefSeq protein sequence ID" value="NP_005362.3"/>
</dbReference>
<dbReference type="UCSC" id="uc009zqc.4">
    <molecule id="Q9UBP6-1"/>
    <property type="organism name" value="human"/>
</dbReference>
<dbReference type="AGR" id="HGNC:7030"/>
<dbReference type="CTD" id="4234"/>
<dbReference type="DisGeNET" id="4234"/>
<dbReference type="GeneCards" id="METTL1"/>
<dbReference type="HGNC" id="HGNC:7030">
    <property type="gene designation" value="METTL1"/>
</dbReference>
<dbReference type="HPA" id="ENSG00000037897">
    <property type="expression patterns" value="Low tissue specificity"/>
</dbReference>
<dbReference type="MIM" id="604466">
    <property type="type" value="gene"/>
</dbReference>
<dbReference type="neXtProt" id="NX_Q9UBP6"/>
<dbReference type="OpenTargets" id="ENSG00000037897"/>
<dbReference type="PharmGKB" id="PA30766"/>
<dbReference type="VEuPathDB" id="HostDB:ENSG00000037897"/>
<dbReference type="eggNOG" id="KOG3115">
    <property type="taxonomic scope" value="Eukaryota"/>
</dbReference>
<dbReference type="GeneTree" id="ENSGT00390000017840"/>
<dbReference type="HOGENOM" id="CLU_050910_3_0_1"/>
<dbReference type="InParanoid" id="Q9UBP6"/>
<dbReference type="OMA" id="LPNYFAK"/>
<dbReference type="OrthoDB" id="47276at2759"/>
<dbReference type="PAN-GO" id="Q9UBP6">
    <property type="GO annotations" value="4 GO annotations based on evolutionary models"/>
</dbReference>
<dbReference type="PhylomeDB" id="Q9UBP6"/>
<dbReference type="TreeFam" id="TF314083"/>
<dbReference type="PathwayCommons" id="Q9UBP6"/>
<dbReference type="Reactome" id="R-HSA-6782315">
    <property type="pathway name" value="tRNA modification in the nucleus and cytosol"/>
</dbReference>
<dbReference type="SignaLink" id="Q9UBP6"/>
<dbReference type="SIGNOR" id="Q9UBP6"/>
<dbReference type="UniPathway" id="UPA00989"/>
<dbReference type="BioGRID-ORCS" id="4234">
    <property type="hits" value="350 hits in 1176 CRISPR screens"/>
</dbReference>
<dbReference type="CD-CODE" id="B5B9A610">
    <property type="entry name" value="PML body"/>
</dbReference>
<dbReference type="ChiTaRS" id="METTL1">
    <property type="organism name" value="human"/>
</dbReference>
<dbReference type="EvolutionaryTrace" id="Q9UBP6"/>
<dbReference type="GeneWiki" id="METTL1"/>
<dbReference type="GenomeRNAi" id="4234"/>
<dbReference type="Pharos" id="Q9UBP6">
    <property type="development level" value="Tbio"/>
</dbReference>
<dbReference type="PRO" id="PR:Q9UBP6"/>
<dbReference type="Proteomes" id="UP000005640">
    <property type="component" value="Chromosome 12"/>
</dbReference>
<dbReference type="RNAct" id="Q9UBP6">
    <property type="molecule type" value="protein"/>
</dbReference>
<dbReference type="Bgee" id="ENSG00000037897">
    <property type="expression patterns" value="Expressed in cervix squamous epithelium and 145 other cell types or tissues"/>
</dbReference>
<dbReference type="ExpressionAtlas" id="Q9UBP6">
    <property type="expression patterns" value="baseline and differential"/>
</dbReference>
<dbReference type="GO" id="GO:0005829">
    <property type="term" value="C:cytosol"/>
    <property type="evidence" value="ECO:0000314"/>
    <property type="project" value="HPA"/>
</dbReference>
<dbReference type="GO" id="GO:0005730">
    <property type="term" value="C:nucleolus"/>
    <property type="evidence" value="ECO:0000314"/>
    <property type="project" value="HPA"/>
</dbReference>
<dbReference type="GO" id="GO:0005654">
    <property type="term" value="C:nucleoplasm"/>
    <property type="evidence" value="ECO:0000314"/>
    <property type="project" value="HPA"/>
</dbReference>
<dbReference type="GO" id="GO:0005634">
    <property type="term" value="C:nucleus"/>
    <property type="evidence" value="ECO:0000314"/>
    <property type="project" value="UniProtKB"/>
</dbReference>
<dbReference type="GO" id="GO:0106143">
    <property type="term" value="C:tRNA (m7G46) methyltransferase complex"/>
    <property type="evidence" value="ECO:0000314"/>
    <property type="project" value="UniProtKB"/>
</dbReference>
<dbReference type="GO" id="GO:0043527">
    <property type="term" value="C:tRNA methyltransferase complex"/>
    <property type="evidence" value="ECO:0000318"/>
    <property type="project" value="GO_Central"/>
</dbReference>
<dbReference type="GO" id="GO:0160090">
    <property type="term" value="F:internal mRNA (guanine-N7-)-methyltransferase activity"/>
    <property type="evidence" value="ECO:0000314"/>
    <property type="project" value="UniProtKB"/>
</dbReference>
<dbReference type="GO" id="GO:0008176">
    <property type="term" value="F:tRNA (guanine(46)-N7)-methyltransferase activity"/>
    <property type="evidence" value="ECO:0000314"/>
    <property type="project" value="UniProtKB"/>
</dbReference>
<dbReference type="GO" id="GO:0000049">
    <property type="term" value="F:tRNA binding"/>
    <property type="evidence" value="ECO:0007669"/>
    <property type="project" value="UniProtKB-UniRule"/>
</dbReference>
<dbReference type="GO" id="GO:0033554">
    <property type="term" value="P:cellular response to stress"/>
    <property type="evidence" value="ECO:0000314"/>
    <property type="project" value="UniProt"/>
</dbReference>
<dbReference type="GO" id="GO:0036265">
    <property type="term" value="P:RNA (guanine-N7)-methylation"/>
    <property type="evidence" value="ECO:0000314"/>
    <property type="project" value="UniProt"/>
</dbReference>
<dbReference type="GO" id="GO:0106004">
    <property type="term" value="P:tRNA (guanine-N7)-methylation"/>
    <property type="evidence" value="ECO:0000314"/>
    <property type="project" value="UniProtKB"/>
</dbReference>
<dbReference type="GO" id="GO:0030488">
    <property type="term" value="P:tRNA methylation"/>
    <property type="evidence" value="ECO:0000318"/>
    <property type="project" value="GO_Central"/>
</dbReference>
<dbReference type="GO" id="GO:0006400">
    <property type="term" value="P:tRNA modification"/>
    <property type="evidence" value="ECO:0000314"/>
    <property type="project" value="UniProtKB"/>
</dbReference>
<dbReference type="GO" id="GO:0036416">
    <property type="term" value="P:tRNA stabilization"/>
    <property type="evidence" value="ECO:0000314"/>
    <property type="project" value="UniProt"/>
</dbReference>
<dbReference type="FunFam" id="3.40.50.150:FF:000060">
    <property type="entry name" value="tRNA (guanine-N(7)-)-methyltransferase"/>
    <property type="match status" value="1"/>
</dbReference>
<dbReference type="Gene3D" id="3.40.50.150">
    <property type="entry name" value="Vaccinia Virus protein VP39"/>
    <property type="match status" value="1"/>
</dbReference>
<dbReference type="HAMAP" id="MF_03055">
    <property type="entry name" value="tRNA_methyltr_TrmB_euk"/>
    <property type="match status" value="1"/>
</dbReference>
<dbReference type="InterPro" id="IPR029063">
    <property type="entry name" value="SAM-dependent_MTases_sf"/>
</dbReference>
<dbReference type="InterPro" id="IPR025763">
    <property type="entry name" value="Trm8_euk"/>
</dbReference>
<dbReference type="InterPro" id="IPR003358">
    <property type="entry name" value="tRNA_(Gua-N-7)_MeTrfase_Trmb"/>
</dbReference>
<dbReference type="NCBIfam" id="TIGR00091">
    <property type="entry name" value="tRNA (guanosine(46)-N7)-methyltransferase TrmB"/>
    <property type="match status" value="1"/>
</dbReference>
<dbReference type="PANTHER" id="PTHR23417">
    <property type="entry name" value="3-DEOXY-D-MANNO-OCTULOSONIC-ACID TRANSFERASE/TRNA GUANINE-N 7 - -METHYLTRANSFERASE"/>
    <property type="match status" value="1"/>
</dbReference>
<dbReference type="PANTHER" id="PTHR23417:SF24">
    <property type="entry name" value="TRNA (GUANINE-N(7)-)-METHYLTRANSFERASE"/>
    <property type="match status" value="1"/>
</dbReference>
<dbReference type="Pfam" id="PF02390">
    <property type="entry name" value="Methyltransf_4"/>
    <property type="match status" value="1"/>
</dbReference>
<dbReference type="SUPFAM" id="SSF53335">
    <property type="entry name" value="S-adenosyl-L-methionine-dependent methyltransferases"/>
    <property type="match status" value="1"/>
</dbReference>
<dbReference type="PROSITE" id="PS51625">
    <property type="entry name" value="SAM_MT_TRMB"/>
    <property type="match status" value="1"/>
</dbReference>
<reference key="1">
    <citation type="journal article" date="1999" name="Genomics">
        <title>Molecular analysis of METTL1, a novel human methyltransferase-like gene with a high degree of phylogenetic conservation.</title>
        <authorList>
            <person name="Bahr A."/>
            <person name="Hankeln T."/>
            <person name="Fiedler T."/>
            <person name="Hegemann J."/>
            <person name="Schmidt E.R."/>
        </authorList>
    </citation>
    <scope>NUCLEOTIDE SEQUENCE [GENOMIC DNA / MRNA] (ISOFORM 1)</scope>
    <scope>TISSUE SPECIFICITY</scope>
    <source>
        <tissue>Brain</tissue>
    </source>
</reference>
<reference key="2">
    <citation type="journal article" date="2004" name="Nat. Genet.">
        <title>Complete sequencing and characterization of 21,243 full-length human cDNAs.</title>
        <authorList>
            <person name="Ota T."/>
            <person name="Suzuki Y."/>
            <person name="Nishikawa T."/>
            <person name="Otsuki T."/>
            <person name="Sugiyama T."/>
            <person name="Irie R."/>
            <person name="Wakamatsu A."/>
            <person name="Hayashi K."/>
            <person name="Sato H."/>
            <person name="Nagai K."/>
            <person name="Kimura K."/>
            <person name="Makita H."/>
            <person name="Sekine M."/>
            <person name="Obayashi M."/>
            <person name="Nishi T."/>
            <person name="Shibahara T."/>
            <person name="Tanaka T."/>
            <person name="Ishii S."/>
            <person name="Yamamoto J."/>
            <person name="Saito K."/>
            <person name="Kawai Y."/>
            <person name="Isono Y."/>
            <person name="Nakamura Y."/>
            <person name="Nagahari K."/>
            <person name="Murakami K."/>
            <person name="Yasuda T."/>
            <person name="Iwayanagi T."/>
            <person name="Wagatsuma M."/>
            <person name="Shiratori A."/>
            <person name="Sudo H."/>
            <person name="Hosoiri T."/>
            <person name="Kaku Y."/>
            <person name="Kodaira H."/>
            <person name="Kondo H."/>
            <person name="Sugawara M."/>
            <person name="Takahashi M."/>
            <person name="Kanda K."/>
            <person name="Yokoi T."/>
            <person name="Furuya T."/>
            <person name="Kikkawa E."/>
            <person name="Omura Y."/>
            <person name="Abe K."/>
            <person name="Kamihara K."/>
            <person name="Katsuta N."/>
            <person name="Sato K."/>
            <person name="Tanikawa M."/>
            <person name="Yamazaki M."/>
            <person name="Ninomiya K."/>
            <person name="Ishibashi T."/>
            <person name="Yamashita H."/>
            <person name="Murakawa K."/>
            <person name="Fujimori K."/>
            <person name="Tanai H."/>
            <person name="Kimata M."/>
            <person name="Watanabe M."/>
            <person name="Hiraoka S."/>
            <person name="Chiba Y."/>
            <person name="Ishida S."/>
            <person name="Ono Y."/>
            <person name="Takiguchi S."/>
            <person name="Watanabe S."/>
            <person name="Yosida M."/>
            <person name="Hotuta T."/>
            <person name="Kusano J."/>
            <person name="Kanehori K."/>
            <person name="Takahashi-Fujii A."/>
            <person name="Hara H."/>
            <person name="Tanase T.-O."/>
            <person name="Nomura Y."/>
            <person name="Togiya S."/>
            <person name="Komai F."/>
            <person name="Hara R."/>
            <person name="Takeuchi K."/>
            <person name="Arita M."/>
            <person name="Imose N."/>
            <person name="Musashino K."/>
            <person name="Yuuki H."/>
            <person name="Oshima A."/>
            <person name="Sasaki N."/>
            <person name="Aotsuka S."/>
            <person name="Yoshikawa Y."/>
            <person name="Matsunawa H."/>
            <person name="Ichihara T."/>
            <person name="Shiohata N."/>
            <person name="Sano S."/>
            <person name="Moriya S."/>
            <person name="Momiyama H."/>
            <person name="Satoh N."/>
            <person name="Takami S."/>
            <person name="Terashima Y."/>
            <person name="Suzuki O."/>
            <person name="Nakagawa S."/>
            <person name="Senoh A."/>
            <person name="Mizoguchi H."/>
            <person name="Goto Y."/>
            <person name="Shimizu F."/>
            <person name="Wakebe H."/>
            <person name="Hishigaki H."/>
            <person name="Watanabe T."/>
            <person name="Sugiyama A."/>
            <person name="Takemoto M."/>
            <person name="Kawakami B."/>
            <person name="Yamazaki M."/>
            <person name="Watanabe K."/>
            <person name="Kumagai A."/>
            <person name="Itakura S."/>
            <person name="Fukuzumi Y."/>
            <person name="Fujimori Y."/>
            <person name="Komiyama M."/>
            <person name="Tashiro H."/>
            <person name="Tanigami A."/>
            <person name="Fujiwara T."/>
            <person name="Ono T."/>
            <person name="Yamada K."/>
            <person name="Fujii Y."/>
            <person name="Ozaki K."/>
            <person name="Hirao M."/>
            <person name="Ohmori Y."/>
            <person name="Kawabata A."/>
            <person name="Hikiji T."/>
            <person name="Kobatake N."/>
            <person name="Inagaki H."/>
            <person name="Ikema Y."/>
            <person name="Okamoto S."/>
            <person name="Okitani R."/>
            <person name="Kawakami T."/>
            <person name="Noguchi S."/>
            <person name="Itoh T."/>
            <person name="Shigeta K."/>
            <person name="Senba T."/>
            <person name="Matsumura K."/>
            <person name="Nakajima Y."/>
            <person name="Mizuno T."/>
            <person name="Morinaga M."/>
            <person name="Sasaki M."/>
            <person name="Togashi T."/>
            <person name="Oyama M."/>
            <person name="Hata H."/>
            <person name="Watanabe M."/>
            <person name="Komatsu T."/>
            <person name="Mizushima-Sugano J."/>
            <person name="Satoh T."/>
            <person name="Shirai Y."/>
            <person name="Takahashi Y."/>
            <person name="Nakagawa K."/>
            <person name="Okumura K."/>
            <person name="Nagase T."/>
            <person name="Nomura N."/>
            <person name="Kikuchi H."/>
            <person name="Masuho Y."/>
            <person name="Yamashita R."/>
            <person name="Nakai K."/>
            <person name="Yada T."/>
            <person name="Nakamura Y."/>
            <person name="Ohara O."/>
            <person name="Isogai T."/>
            <person name="Sugano S."/>
        </authorList>
    </citation>
    <scope>NUCLEOTIDE SEQUENCE [LARGE SCALE MRNA] (ISOFORM 1)</scope>
</reference>
<reference key="3">
    <citation type="submission" date="2005-04" db="EMBL/GenBank/DDBJ databases">
        <authorList>
            <person name="Suzuki Y."/>
            <person name="Sugano S."/>
            <person name="Totoki Y."/>
            <person name="Toyoda A."/>
            <person name="Takeda T."/>
            <person name="Sakaki Y."/>
            <person name="Tanaka A."/>
            <person name="Yokoyama S."/>
        </authorList>
    </citation>
    <scope>NUCLEOTIDE SEQUENCE [LARGE SCALE MRNA] (ISOFORM 2)</scope>
    <source>
        <tissue>Kidney proximal tubule</tissue>
    </source>
</reference>
<reference key="4">
    <citation type="journal article" date="2006" name="Nature">
        <title>The finished DNA sequence of human chromosome 12.</title>
        <authorList>
            <person name="Scherer S.E."/>
            <person name="Muzny D.M."/>
            <person name="Buhay C.J."/>
            <person name="Chen R."/>
            <person name="Cree A."/>
            <person name="Ding Y."/>
            <person name="Dugan-Rocha S."/>
            <person name="Gill R."/>
            <person name="Gunaratne P."/>
            <person name="Harris R.A."/>
            <person name="Hawes A.C."/>
            <person name="Hernandez J."/>
            <person name="Hodgson A.V."/>
            <person name="Hume J."/>
            <person name="Jackson A."/>
            <person name="Khan Z.M."/>
            <person name="Kovar-Smith C."/>
            <person name="Lewis L.R."/>
            <person name="Lozado R.J."/>
            <person name="Metzker M.L."/>
            <person name="Milosavljevic A."/>
            <person name="Miner G.R."/>
            <person name="Montgomery K.T."/>
            <person name="Morgan M.B."/>
            <person name="Nazareth L.V."/>
            <person name="Scott G."/>
            <person name="Sodergren E."/>
            <person name="Song X.-Z."/>
            <person name="Steffen D."/>
            <person name="Lovering R.C."/>
            <person name="Wheeler D.A."/>
            <person name="Worley K.C."/>
            <person name="Yuan Y."/>
            <person name="Zhang Z."/>
            <person name="Adams C.Q."/>
            <person name="Ansari-Lari M.A."/>
            <person name="Ayele M."/>
            <person name="Brown M.J."/>
            <person name="Chen G."/>
            <person name="Chen Z."/>
            <person name="Clerc-Blankenburg K.P."/>
            <person name="Davis C."/>
            <person name="Delgado O."/>
            <person name="Dinh H.H."/>
            <person name="Draper H."/>
            <person name="Gonzalez-Garay M.L."/>
            <person name="Havlak P."/>
            <person name="Jackson L.R."/>
            <person name="Jacob L.S."/>
            <person name="Kelly S.H."/>
            <person name="Li L."/>
            <person name="Li Z."/>
            <person name="Liu J."/>
            <person name="Liu W."/>
            <person name="Lu J."/>
            <person name="Maheshwari M."/>
            <person name="Nguyen B.-V."/>
            <person name="Okwuonu G.O."/>
            <person name="Pasternak S."/>
            <person name="Perez L.M."/>
            <person name="Plopper F.J.H."/>
            <person name="Santibanez J."/>
            <person name="Shen H."/>
            <person name="Tabor P.E."/>
            <person name="Verduzco D."/>
            <person name="Waldron L."/>
            <person name="Wang Q."/>
            <person name="Williams G.A."/>
            <person name="Zhang J."/>
            <person name="Zhou J."/>
            <person name="Allen C.C."/>
            <person name="Amin A.G."/>
            <person name="Anyalebechi V."/>
            <person name="Bailey M."/>
            <person name="Barbaria J.A."/>
            <person name="Bimage K.E."/>
            <person name="Bryant N.P."/>
            <person name="Burch P.E."/>
            <person name="Burkett C.E."/>
            <person name="Burrell K.L."/>
            <person name="Calderon E."/>
            <person name="Cardenas V."/>
            <person name="Carter K."/>
            <person name="Casias K."/>
            <person name="Cavazos I."/>
            <person name="Cavazos S.R."/>
            <person name="Ceasar H."/>
            <person name="Chacko J."/>
            <person name="Chan S.N."/>
            <person name="Chavez D."/>
            <person name="Christopoulos C."/>
            <person name="Chu J."/>
            <person name="Cockrell R."/>
            <person name="Cox C.D."/>
            <person name="Dang M."/>
            <person name="Dathorne S.R."/>
            <person name="David R."/>
            <person name="Davis C.M."/>
            <person name="Davy-Carroll L."/>
            <person name="Deshazo D.R."/>
            <person name="Donlin J.E."/>
            <person name="D'Souza L."/>
            <person name="Eaves K.A."/>
            <person name="Egan A."/>
            <person name="Emery-Cohen A.J."/>
            <person name="Escotto M."/>
            <person name="Flagg N."/>
            <person name="Forbes L.D."/>
            <person name="Gabisi A.M."/>
            <person name="Garza M."/>
            <person name="Hamilton C."/>
            <person name="Henderson N."/>
            <person name="Hernandez O."/>
            <person name="Hines S."/>
            <person name="Hogues M.E."/>
            <person name="Huang M."/>
            <person name="Idlebird D.G."/>
            <person name="Johnson R."/>
            <person name="Jolivet A."/>
            <person name="Jones S."/>
            <person name="Kagan R."/>
            <person name="King L.M."/>
            <person name="Leal B."/>
            <person name="Lebow H."/>
            <person name="Lee S."/>
            <person name="LeVan J.M."/>
            <person name="Lewis L.C."/>
            <person name="London P."/>
            <person name="Lorensuhewa L.M."/>
            <person name="Loulseged H."/>
            <person name="Lovett D.A."/>
            <person name="Lucier A."/>
            <person name="Lucier R.L."/>
            <person name="Ma J."/>
            <person name="Madu R.C."/>
            <person name="Mapua P."/>
            <person name="Martindale A.D."/>
            <person name="Martinez E."/>
            <person name="Massey E."/>
            <person name="Mawhiney S."/>
            <person name="Meador M.G."/>
            <person name="Mendez S."/>
            <person name="Mercado C."/>
            <person name="Mercado I.C."/>
            <person name="Merritt C.E."/>
            <person name="Miner Z.L."/>
            <person name="Minja E."/>
            <person name="Mitchell T."/>
            <person name="Mohabbat F."/>
            <person name="Mohabbat K."/>
            <person name="Montgomery B."/>
            <person name="Moore N."/>
            <person name="Morris S."/>
            <person name="Munidasa M."/>
            <person name="Ngo R.N."/>
            <person name="Nguyen N.B."/>
            <person name="Nickerson E."/>
            <person name="Nwaokelemeh O.O."/>
            <person name="Nwokenkwo S."/>
            <person name="Obregon M."/>
            <person name="Oguh M."/>
            <person name="Oragunye N."/>
            <person name="Oviedo R.J."/>
            <person name="Parish B.J."/>
            <person name="Parker D.N."/>
            <person name="Parrish J."/>
            <person name="Parks K.L."/>
            <person name="Paul H.A."/>
            <person name="Payton B.A."/>
            <person name="Perez A."/>
            <person name="Perrin W."/>
            <person name="Pickens A."/>
            <person name="Primus E.L."/>
            <person name="Pu L.-L."/>
            <person name="Puazo M."/>
            <person name="Quiles M.M."/>
            <person name="Quiroz J.B."/>
            <person name="Rabata D."/>
            <person name="Reeves K."/>
            <person name="Ruiz S.J."/>
            <person name="Shao H."/>
            <person name="Sisson I."/>
            <person name="Sonaike T."/>
            <person name="Sorelle R.P."/>
            <person name="Sutton A.E."/>
            <person name="Svatek A.F."/>
            <person name="Svetz L.A."/>
            <person name="Tamerisa K.S."/>
            <person name="Taylor T.R."/>
            <person name="Teague B."/>
            <person name="Thomas N."/>
            <person name="Thorn R.D."/>
            <person name="Trejos Z.Y."/>
            <person name="Trevino B.K."/>
            <person name="Ukegbu O.N."/>
            <person name="Urban J.B."/>
            <person name="Vasquez L.I."/>
            <person name="Vera V.A."/>
            <person name="Villasana D.M."/>
            <person name="Wang L."/>
            <person name="Ward-Moore S."/>
            <person name="Warren J.T."/>
            <person name="Wei X."/>
            <person name="White F."/>
            <person name="Williamson A.L."/>
            <person name="Wleczyk R."/>
            <person name="Wooden H.S."/>
            <person name="Wooden S.H."/>
            <person name="Yen J."/>
            <person name="Yoon L."/>
            <person name="Yoon V."/>
            <person name="Zorrilla S.E."/>
            <person name="Nelson D."/>
            <person name="Kucherlapati R."/>
            <person name="Weinstock G."/>
            <person name="Gibbs R.A."/>
        </authorList>
    </citation>
    <scope>NUCLEOTIDE SEQUENCE [LARGE SCALE GENOMIC DNA]</scope>
</reference>
<reference key="5">
    <citation type="journal article" date="2004" name="Genome Res.">
        <title>The status, quality, and expansion of the NIH full-length cDNA project: the Mammalian Gene Collection (MGC).</title>
        <authorList>
            <consortium name="The MGC Project Team"/>
        </authorList>
    </citation>
    <scope>NUCLEOTIDE SEQUENCE [LARGE SCALE MRNA] (ISOFORM 1)</scope>
    <source>
        <tissue>Brain</tissue>
    </source>
</reference>
<reference key="6">
    <citation type="journal article" date="2002" name="RNA">
        <title>Two proteins that form a complex are required for 7-methylguanosine modification of yeast tRNA.</title>
        <authorList>
            <person name="Alexandrov A."/>
            <person name="Martzen M.R."/>
            <person name="Phizicky E.M."/>
        </authorList>
    </citation>
    <scope>FUNCTION</scope>
    <scope>PATHWAY</scope>
    <scope>INTERACTION WITH WDR4</scope>
</reference>
<reference key="7">
    <citation type="journal article" date="2005" name="EMBO J.">
        <title>The tRNA methylase METTL1 is phosphorylated and inactivated by PKB and RSK in vitro and in cells.</title>
        <authorList>
            <person name="Cartlidge R.A."/>
            <person name="Knebel A."/>
            <person name="Peggie M."/>
            <person name="Alexandrov A."/>
            <person name="Phizicky E.M."/>
            <person name="Cohen P."/>
        </authorList>
    </citation>
    <scope>SUBCELLULAR LOCATION</scope>
    <scope>INTERACTION WITH WDR4</scope>
    <scope>PHOSPHORYLATION AT SER-27</scope>
    <scope>MUTAGENESIS OF SER-27</scope>
</reference>
<reference key="8">
    <citation type="journal article" date="2009" name="Anal. Chem.">
        <title>Lys-N and trypsin cover complementary parts of the phosphoproteome in a refined SCX-based approach.</title>
        <authorList>
            <person name="Gauci S."/>
            <person name="Helbig A.O."/>
            <person name="Slijper M."/>
            <person name="Krijgsveld J."/>
            <person name="Heck A.J."/>
            <person name="Mohammed S."/>
        </authorList>
    </citation>
    <scope>ACETYLATION [LARGE SCALE ANALYSIS] AT ALA-2</scope>
    <scope>CLEAVAGE OF INITIATOR METHIONINE [LARGE SCALE ANALYSIS]</scope>
    <scope>IDENTIFICATION BY MASS SPECTROMETRY [LARGE SCALE ANALYSIS]</scope>
</reference>
<reference key="9">
    <citation type="journal article" date="2011" name="BMC Syst. Biol.">
        <title>Initial characterization of the human central proteome.</title>
        <authorList>
            <person name="Burkard T.R."/>
            <person name="Planyavsky M."/>
            <person name="Kaupe I."/>
            <person name="Breitwieser F.P."/>
            <person name="Buerckstuemmer T."/>
            <person name="Bennett K.L."/>
            <person name="Superti-Furga G."/>
            <person name="Colinge J."/>
        </authorList>
    </citation>
    <scope>IDENTIFICATION BY MASS SPECTROMETRY [LARGE SCALE ANALYSIS]</scope>
</reference>
<reference key="10">
    <citation type="journal article" date="2013" name="J. Proteome Res.">
        <title>Toward a comprehensive characterization of a human cancer cell phosphoproteome.</title>
        <authorList>
            <person name="Zhou H."/>
            <person name="Di Palma S."/>
            <person name="Preisinger C."/>
            <person name="Peng M."/>
            <person name="Polat A.N."/>
            <person name="Heck A.J."/>
            <person name="Mohammed S."/>
        </authorList>
    </citation>
    <scope>PHOSPHORYLATION [LARGE SCALE ANALYSIS] AT SER-27</scope>
    <scope>IDENTIFICATION BY MASS SPECTROMETRY [LARGE SCALE ANALYSIS]</scope>
    <source>
        <tissue>Erythroleukemia</tissue>
    </source>
</reference>
<reference key="11">
    <citation type="journal article" date="2014" name="J. Proteomics">
        <title>An enzyme assisted RP-RPLC approach for in-depth analysis of human liver phosphoproteome.</title>
        <authorList>
            <person name="Bian Y."/>
            <person name="Song C."/>
            <person name="Cheng K."/>
            <person name="Dong M."/>
            <person name="Wang F."/>
            <person name="Huang J."/>
            <person name="Sun D."/>
            <person name="Wang L."/>
            <person name="Ye M."/>
            <person name="Zou H."/>
        </authorList>
    </citation>
    <scope>PHOSPHORYLATION [LARGE SCALE ANALYSIS] AT SER-27</scope>
    <scope>IDENTIFICATION BY MASS SPECTROMETRY [LARGE SCALE ANALYSIS]</scope>
    <source>
        <tissue>Liver</tissue>
    </source>
</reference>
<reference key="12">
    <citation type="journal article" date="2016" name="PLoS Biol.">
        <title>Wuho is a new member in maintaining genome stability through its interaction with flap endonuclease 1.</title>
        <authorList>
            <person name="Cheng I.C."/>
            <person name="Chen B.C."/>
            <person name="Shuai H.H."/>
            <person name="Chien F.C."/>
            <person name="Chen P."/>
            <person name="Hsieh T.S."/>
        </authorList>
    </citation>
    <scope>SUBCELLULAR LOCATION</scope>
</reference>
<reference key="13">
    <citation type="journal article" date="2019" name="Mol. Cell">
        <title>Transcriptome-wide mapping of internal N7-methylguanosine methylome in mammalian mRNA.</title>
        <authorList>
            <person name="Zhang L.S."/>
            <person name="Liu C."/>
            <person name="Ma H."/>
            <person name="Dai Q."/>
            <person name="Sun H.L."/>
            <person name="Luo G."/>
            <person name="Zhang Z."/>
            <person name="Zhang L."/>
            <person name="Hu L."/>
            <person name="Dong X."/>
            <person name="He C."/>
        </authorList>
    </citation>
    <scope>FUNCTION</scope>
    <scope>PATHWAY</scope>
    <scope>CATALYTIC ACTIVITY</scope>
</reference>
<reference key="14">
    <citation type="journal article" date="2019" name="Mol. Cell">
        <title>METTL1 promotes let-7 microRNA processing via m7G methylation.</title>
        <authorList>
            <person name="Pandolfini L."/>
            <person name="Barbieri I."/>
            <person name="Bannister A.J."/>
            <person name="Hendrick A."/>
            <person name="Andrews B."/>
            <person name="Webster N."/>
            <person name="Murat P."/>
            <person name="Mach P."/>
            <person name="Brandi R."/>
            <person name="Robson S.C."/>
            <person name="Migliori V."/>
            <person name="Alendar A."/>
            <person name="d'Onofrio M."/>
            <person name="Balasubramanian S."/>
            <person name="Kouzarides T."/>
        </authorList>
    </citation>
    <scope>FUNCTION</scope>
    <scope>CATALYTIC ACTIVITY</scope>
    <scope>MUTAGENESIS OF 107-GLU--ARG-109</scope>
</reference>
<reference key="15">
    <citation type="journal article" date="2021" name="Mol. Cell">
        <title>METTL1-mediated m7G modification of Arg-TCT tRNA drives oncogenic transformation.</title>
        <authorList>
            <person name="Orellana E.A."/>
            <person name="Liu Q."/>
            <person name="Yankova E."/>
            <person name="Pirouz M."/>
            <person name="De Braekeleer E."/>
            <person name="Zhang W."/>
            <person name="Lim J."/>
            <person name="Aspris D."/>
            <person name="Sendinc E."/>
            <person name="Garyfallos D.A."/>
            <person name="Gu M."/>
            <person name="Ali R."/>
            <person name="Gutierrez A."/>
            <person name="Mikutis S."/>
            <person name="Bernardes G.J.L."/>
            <person name="Fischer E.S."/>
            <person name="Bradley A."/>
            <person name="Vassiliou G.S."/>
            <person name="Slack F.J."/>
            <person name="Tzelepis K."/>
            <person name="Gregory R.I."/>
        </authorList>
    </citation>
    <scope>FUNCTION</scope>
    <scope>CATALYTIC ACTIVITY</scope>
    <scope>INDUCTION</scope>
</reference>
<reference key="16">
    <citation type="journal article" date="2021" name="Mol. Cell">
        <title>N7-Methylguanosine tRNA modification enhances oncogenic mRNA translation and promotes intrahepatic cholangiocarcinoma progression.</title>
        <authorList>
            <person name="Dai Z."/>
            <person name="Liu H."/>
            <person name="Liao J."/>
            <person name="Huang C."/>
            <person name="Ren X."/>
            <person name="Zhu W."/>
            <person name="Zhu S."/>
            <person name="Peng B."/>
            <person name="Li S."/>
            <person name="Lai J."/>
            <person name="Liang L."/>
            <person name="Xu L."/>
            <person name="Peng S."/>
            <person name="Lin S."/>
            <person name="Kuang M."/>
        </authorList>
    </citation>
    <scope>FUNCTION</scope>
    <scope>CATALYTIC ACTIVITY</scope>
    <scope>INDUCTION</scope>
    <scope>MUTAGENESIS OF 160-LEU--ASP-163</scope>
</reference>
<reference key="17">
    <citation type="journal article" date="2021" name="Mol. Ther.">
        <title>METTL1/WDR4-mediated m7G tRNA modifications and m7G codon usage promote mRNA translation and lung cancer progression.</title>
        <authorList>
            <person name="Ma J."/>
            <person name="Han H."/>
            <person name="Huang Y."/>
            <person name="Yang C."/>
            <person name="Zheng S."/>
            <person name="Cai T."/>
            <person name="Bi J."/>
            <person name="Huang X."/>
            <person name="Liu R."/>
            <person name="Huang L."/>
            <person name="Luo Y."/>
            <person name="Li W."/>
            <person name="Lin S."/>
        </authorList>
    </citation>
    <scope>INDUCTION</scope>
</reference>
<reference key="18">
    <citation type="journal article" date="2023" name="Cell">
        <title>QKI shuttles internal m7G-modified transcripts into stress granules and modulates mRNA metabolism.</title>
        <authorList>
            <person name="Zhao Z."/>
            <person name="Qing Y."/>
            <person name="Dong L."/>
            <person name="Han L."/>
            <person name="Wu D."/>
            <person name="Li Y."/>
            <person name="Li W."/>
            <person name="Xue J."/>
            <person name="Zhou K."/>
            <person name="Sun M."/>
            <person name="Tan B."/>
            <person name="Chen Z."/>
            <person name="Shen C."/>
            <person name="Gao L."/>
            <person name="Small A."/>
            <person name="Wang K."/>
            <person name="Leung K."/>
            <person name="Zhang Z."/>
            <person name="Qin X."/>
            <person name="Deng X."/>
            <person name="Xia Q."/>
            <person name="Su R."/>
            <person name="Chen J."/>
        </authorList>
    </citation>
    <scope>FUNCTION</scope>
    <scope>CATALYTIC ACTIVITY</scope>
    <scope>INTERACTION WITH WDR4</scope>
    <scope>MUTAGENESIS OF 107-GLU--ARG-109</scope>
</reference>
<reference key="19">
    <citation type="submission" date="2008-04" db="PDB data bank">
        <title>Crystal structure of human methyltransferase-like protein 1.</title>
        <authorList>
            <consortium name="Structural genomics consortium (SGC)"/>
        </authorList>
    </citation>
    <scope>X-RAY CRYSTALLOGRAPHY (1.55 ANGSTROMS) OF 32-265 IN COMPLEX WITH S-ADENOSYL-L-METHIONINE</scope>
</reference>
<reference key="20">
    <citation type="journal article" date="2023" name="Cell Discov.">
        <title>Structural insight into how WDR4 promotes the tRNA N7-methylguanosine methyltransferase activity of METTL1.</title>
        <authorList>
            <person name="Jin X."/>
            <person name="Guan Z."/>
            <person name="Hu N."/>
            <person name="He C."/>
            <person name="Yin P."/>
            <person name="Gong Z."/>
            <person name="Zhang D."/>
        </authorList>
    </citation>
    <scope>X-RAY CRYSTALLOGRAPHY (1.80 ANGSTROMS) OF 30-265 IN COMPLEX WITH WDR4</scope>
    <scope>FUNCTION</scope>
    <scope>CATALYTIC ACTIVITY</scope>
    <scope>PATHWAY</scope>
    <scope>INTERACTION WITH WDR4</scope>
    <scope>MUTAGENESIS OF LYS-40; LYS-143; LYS-151 AND LYS-172</scope>
</reference>
<reference key="21">
    <citation type="journal article" date="2023" name="Nature">
        <title>Structures and mechanisms of tRNA methylation by METTL1-WDR4.</title>
        <authorList>
            <person name="Ruiz-Arroyo V.M."/>
            <person name="Raj R."/>
            <person name="Babu K."/>
            <person name="Onolbaatar O."/>
            <person name="Roberts P.H."/>
            <person name="Nam Y."/>
        </authorList>
    </citation>
    <scope>X-RAY CRYSTALLOGRAPHY (1.93 ANGSTROMS) OF 20-265 IN COMPLEX WITH S-ADENOSYL-L-HOMOCYSTEINE AND WDR4</scope>
    <scope>STRUCTURE BY ELECTRON MICROSCOPY (3.53 ANGSTROMS) IN COMPLEX WITH S-ADENOSYL-L-METHIONINE; S-ADENOSYL-L-HOMOCYSTEINE; WDR4 AND TRNA</scope>
    <scope>FUNCTION</scope>
    <scope>CATALYTIC ACTIVITY</scope>
    <scope>PATHWAY</scope>
    <scope>ACTIVE SITE</scope>
    <scope>DOMAIN</scope>
    <scope>INTERACTION WITH WDR4</scope>
    <scope>MUTAGENESIS OF ARG-24; SER-27; PRO-29; ASP-163; LYS-167; ARG-168; TRP-173; ASP-199; GLU-240; LYS-243 AND ARG-246</scope>
</reference>
<reference key="22">
    <citation type="journal article" date="2023" name="Nature">
        <title>Structural basis of regulated m7G tRNA modification by METTL1-WDR4.</title>
        <authorList>
            <person name="Li J."/>
            <person name="Wang L."/>
            <person name="Hahn Q."/>
            <person name="Nowak R.P."/>
            <person name="Viennet T."/>
            <person name="Orellana E.A."/>
            <person name="Roy Burman S.S."/>
            <person name="Yue H."/>
            <person name="Hunkeler M."/>
            <person name="Fontana P."/>
            <person name="Wu H."/>
            <person name="Arthanari H."/>
            <person name="Fischer E.S."/>
            <person name="Gregory R.I."/>
        </authorList>
    </citation>
    <scope>X-RAY CRYSTALLOGRAPHY (3.1 ANGSTROMS) IN COMPLEX WITH S-ADENOSYL-L-HOMOCYSTEINE; WDR4 AND TRNA</scope>
    <scope>STRUCTURE BY ELECTRON MICROSCOPY (3.3 ANGSTROMS) IN COMPLEX WITH WDR4 AND TRNA</scope>
    <scope>FUNCTION</scope>
    <scope>CATALYTIC ACTIVITY</scope>
    <scope>PATHWAY</scope>
    <scope>ACTIVE SITE</scope>
    <scope>DOMAIN</scope>
    <scope>INTERACTION WITH WDR4</scope>
    <scope>PHOSPHORYLATION AT SER-27</scope>
    <scope>MUTAGENESIS OF LYS-18; SER-27; ARG-109; LYS-111; ASP-118; LYS-143; 160-LEU--ASP-163; HIS-165; LYS-167; LYS-170; LYS-243 AND ARG-246</scope>
</reference>
<feature type="initiator methionine" description="Removed" evidence="27">
    <location>
        <position position="1"/>
    </location>
</feature>
<feature type="chain" id="PRO_0000171431" description="tRNA (guanine-N(7)-)-methyltransferase">
    <location>
        <begin position="2"/>
        <end position="276"/>
    </location>
</feature>
<feature type="region of interest" description="Disordered" evidence="20">
    <location>
        <begin position="1"/>
        <end position="36"/>
    </location>
</feature>
<feature type="region of interest" description="AlphaC helix" evidence="12">
    <location>
        <begin position="164"/>
        <end position="172"/>
    </location>
</feature>
<feature type="region of interest" description="Alpha6 helix" evidence="12">
    <location>
        <begin position="238"/>
        <end position="246"/>
    </location>
</feature>
<feature type="active site" evidence="19 20">
    <location>
        <position position="163"/>
    </location>
</feature>
<feature type="binding site" evidence="11 12 23 24 26">
    <location>
        <position position="84"/>
    </location>
    <ligand>
        <name>S-adenosyl-L-homocysteine</name>
        <dbReference type="ChEBI" id="CHEBI:57856"/>
    </ligand>
</feature>
<feature type="binding site" evidence="11 15 22 25">
    <location>
        <position position="84"/>
    </location>
    <ligand>
        <name>S-adenosyl-L-methionine</name>
        <dbReference type="ChEBI" id="CHEBI:59789"/>
    </ligand>
</feature>
<feature type="binding site" evidence="11 12 23 24 26">
    <location>
        <position position="107"/>
    </location>
    <ligand>
        <name>S-adenosyl-L-homocysteine</name>
        <dbReference type="ChEBI" id="CHEBI:57856"/>
    </ligand>
</feature>
<feature type="binding site" evidence="11 15 22 25">
    <location>
        <position position="107"/>
    </location>
    <ligand>
        <name>S-adenosyl-L-methionine</name>
        <dbReference type="ChEBI" id="CHEBI:59789"/>
    </ligand>
</feature>
<feature type="binding site" evidence="12 23">
    <location>
        <position position="108"/>
    </location>
    <ligand>
        <name>S-adenosyl-L-homocysteine</name>
        <dbReference type="ChEBI" id="CHEBI:57856"/>
    </ligand>
</feature>
<feature type="binding site" evidence="11 26">
    <location>
        <position position="109"/>
    </location>
    <ligand>
        <name>S-adenosyl-L-homocysteine</name>
        <dbReference type="ChEBI" id="CHEBI:57856"/>
    </ligand>
</feature>
<feature type="binding site" evidence="15 22">
    <location>
        <position position="109"/>
    </location>
    <ligand>
        <name>S-adenosyl-L-methionine</name>
        <dbReference type="ChEBI" id="CHEBI:59789"/>
    </ligand>
</feature>
<feature type="binding site" evidence="11 24 26">
    <location>
        <position position="140"/>
    </location>
    <ligand>
        <name>S-adenosyl-L-homocysteine</name>
        <dbReference type="ChEBI" id="CHEBI:57856"/>
    </ligand>
</feature>
<feature type="binding site" evidence="11 15 22 25">
    <location>
        <position position="140"/>
    </location>
    <ligand>
        <name>S-adenosyl-L-methionine</name>
        <dbReference type="ChEBI" id="CHEBI:59789"/>
    </ligand>
</feature>
<feature type="binding site" evidence="11 12 23 24 26">
    <location>
        <position position="141"/>
    </location>
    <ligand>
        <name>S-adenosyl-L-homocysteine</name>
        <dbReference type="ChEBI" id="CHEBI:57856"/>
    </ligand>
</feature>
<feature type="binding site" evidence="15 22">
    <location>
        <position position="141"/>
    </location>
    <ligand>
        <name>S-adenosyl-L-methionine</name>
        <dbReference type="ChEBI" id="CHEBI:59789"/>
    </ligand>
</feature>
<feature type="binding site" evidence="11 24">
    <location>
        <position position="160"/>
    </location>
    <ligand>
        <name>S-adenosyl-L-homocysteine</name>
        <dbReference type="ChEBI" id="CHEBI:57856"/>
    </ligand>
</feature>
<feature type="binding site" evidence="15 22">
    <location>
        <position position="160"/>
    </location>
    <ligand>
        <name>S-adenosyl-L-methionine</name>
        <dbReference type="ChEBI" id="CHEBI:59789"/>
    </ligand>
</feature>
<feature type="binding site" evidence="11 24">
    <location>
        <position position="238"/>
    </location>
    <ligand>
        <name>S-adenosyl-L-homocysteine</name>
        <dbReference type="ChEBI" id="CHEBI:57856"/>
    </ligand>
</feature>
<feature type="binding site" evidence="11 15 22 25">
    <location>
        <position position="238"/>
    </location>
    <ligand>
        <name>S-adenosyl-L-methionine</name>
        <dbReference type="ChEBI" id="CHEBI:59789"/>
    </ligand>
</feature>
<feature type="binding site" evidence="11 24 26">
    <location>
        <position position="240"/>
    </location>
    <ligand>
        <name>S-adenosyl-L-homocysteine</name>
        <dbReference type="ChEBI" id="CHEBI:57856"/>
    </ligand>
</feature>
<feature type="binding site" evidence="15 22">
    <location>
        <position position="240"/>
    </location>
    <ligand>
        <name>S-adenosyl-L-methionine</name>
        <dbReference type="ChEBI" id="CHEBI:59789"/>
    </ligand>
</feature>
<feature type="modified residue" description="N-acetylalanine" evidence="27">
    <location>
        <position position="2"/>
    </location>
</feature>
<feature type="modified residue" description="Phosphoserine; by PKB/AKT1 and RPS6KA3" evidence="4 12 28 29">
    <location>
        <position position="27"/>
    </location>
</feature>
<feature type="splice variant" id="VSP_044671" description="In isoform 2." evidence="17">
    <original>VELSPLFPDTLILGLEIRVKVSDYVQDRIRALRAAPAGGFQNIACLRSNAMKHLPNFFYKGQLT</original>
    <variation>ADKDVLPLPRPTFQADKAQVANHQSHPASRICLRAKSWGAGVYHNRCAGATRLDVHSFRRAPTV</variation>
    <location>
        <begin position="92"/>
        <end position="155"/>
    </location>
</feature>
<feature type="splice variant" id="VSP_044672" description="In isoform 2." evidence="17">
    <location>
        <begin position="156"/>
        <end position="276"/>
    </location>
</feature>
<feature type="mutagenesis site" description="Strongly reduced methyltransferase activity." evidence="12">
    <original>K</original>
    <variation>A</variation>
    <location>
        <position position="18"/>
    </location>
</feature>
<feature type="mutagenesis site" description="Abolished methyltransferase activity." evidence="11">
    <original>R</original>
    <variation>A</variation>
    <location>
        <position position="24"/>
    </location>
</feature>
<feature type="mutagenesis site" description="Abolished phosphorylation; does not affect methyltransferase activity." evidence="4 12">
    <original>S</original>
    <variation>A</variation>
    <variation>S</variation>
    <variation>C</variation>
    <variation>I</variation>
    <location>
        <position position="27"/>
    </location>
</feature>
<feature type="mutagenesis site" description="Mimics phosphorylation; abolished affect methyltransferase activity." evidence="4 11 12">
    <original>S</original>
    <variation>D</variation>
    <variation>E</variation>
    <location>
        <position position="27"/>
    </location>
</feature>
<feature type="mutagenesis site" description="Abolished methyltransferase activity." evidence="12">
    <original>S</original>
    <variation>K</variation>
    <variation>W</variation>
    <location>
        <position position="27"/>
    </location>
</feature>
<feature type="mutagenesis site" description="Strongly reduced methyltransferase activity." evidence="11">
    <original>P</original>
    <variation>A</variation>
    <location>
        <position position="29"/>
    </location>
</feature>
<feature type="mutagenesis site" description="Abolished interaction with WDR4; when associated with D-143, D-151 and D-172." evidence="13">
    <original>K</original>
    <variation>D</variation>
    <location>
        <position position="40"/>
    </location>
</feature>
<feature type="mutagenesis site" description="Abolished RNA methyltransferase activity." evidence="6 14">
    <original>EIR</original>
    <variation>AAA</variation>
    <location>
        <begin position="107"/>
        <end position="109"/>
    </location>
</feature>
<feature type="mutagenesis site" description="Abolished methyltransferase activity." evidence="12">
    <original>R</original>
    <variation>A</variation>
    <location>
        <position position="109"/>
    </location>
</feature>
<feature type="mutagenesis site" description="Slightly reduced methyltransferase activity." evidence="12">
    <original>K</original>
    <variation>A</variation>
    <location>
        <position position="111"/>
    </location>
</feature>
<feature type="mutagenesis site" description="Slightly reduced methyltransferase activity." evidence="12">
    <original>D</original>
    <variation>A</variation>
    <location>
        <position position="118"/>
    </location>
</feature>
<feature type="mutagenesis site" description="Abolished methyltransferase activity." evidence="12">
    <original>K</original>
    <variation>A</variation>
    <location>
        <position position="143"/>
    </location>
</feature>
<feature type="mutagenesis site" description="Abolished interaction with WDR4; when associated with D-40, D-151 and D-172." evidence="13">
    <original>K</original>
    <variation>D</variation>
    <location>
        <position position="143"/>
    </location>
</feature>
<feature type="mutagenesis site" description="Abolished interaction with WDR4; when associated with D-40, D-143 and D-172." evidence="13">
    <original>K</original>
    <variation>D</variation>
    <location>
        <position position="151"/>
    </location>
</feature>
<feature type="mutagenesis site" description="Abolished methyltransferase activity." evidence="8 12">
    <original>LFPD</original>
    <variation>AFPA</variation>
    <location>
        <begin position="160"/>
        <end position="163"/>
    </location>
</feature>
<feature type="mutagenesis site" description="Abolished methyltransferase activity." evidence="11">
    <original>D</original>
    <variation>A</variation>
    <location>
        <position position="163"/>
    </location>
</feature>
<feature type="mutagenesis site" description="Abolished tRNA-binding; when associated with A-167, A-170, A-243 and A-246." evidence="12">
    <original>H</original>
    <variation>A</variation>
    <location>
        <position position="165"/>
    </location>
</feature>
<feature type="mutagenesis site" description="Abolished methyltransferase activity. Abolished tRNA-binding; when associated with A-165, A-170, A-243 and A-246." evidence="11 12">
    <original>K</original>
    <variation>A</variation>
    <location>
        <position position="167"/>
    </location>
</feature>
<feature type="mutagenesis site" description="Does not affect methyltransferase activity." evidence="11">
    <original>R</original>
    <variation>A</variation>
    <location>
        <position position="168"/>
    </location>
</feature>
<feature type="mutagenesis site" description="Abolished tRNA-binding; when associated with A-165, A-167, A-243 and A-246." evidence="12">
    <original>K</original>
    <variation>A</variation>
    <location>
        <position position="170"/>
    </location>
</feature>
<feature type="mutagenesis site" description="Abolished interaction with WDR4; when associated with D-40, D-143 and D-151." evidence="13">
    <original>K</original>
    <variation>D</variation>
    <location>
        <position position="172"/>
    </location>
</feature>
<feature type="mutagenesis site" description="Strongly reduced methyltransferase activity." evidence="11">
    <original>W</original>
    <variation>A</variation>
    <location>
        <position position="173"/>
    </location>
</feature>
<feature type="mutagenesis site" description="Abolished methyltransferase activity." evidence="11">
    <original>D</original>
    <variation>A</variation>
    <location>
        <position position="199"/>
    </location>
</feature>
<feature type="mutagenesis site" description="Abolished methyltransferase activity." evidence="11">
    <original>E</original>
    <variation>A</variation>
    <location>
        <position position="240"/>
    </location>
</feature>
<feature type="mutagenesis site" description="Slightly reduced tRNA-binding. Abolished tRNA-binding; when associated with A-165, A-167, A-170 and A-246. Strongly reduced methyltransferase activity." evidence="11 12">
    <original>K</original>
    <variation>A</variation>
    <location>
        <position position="243"/>
    </location>
</feature>
<feature type="mutagenesis site" description="Slightly reduced tRNA-binding. Abolished tRNA-binding; when associated with A-165, A-167, A-170 and A-243. Does not affect methyltransferase activity." evidence="11 12">
    <original>R</original>
    <variation>A</variation>
    <location>
        <position position="246"/>
    </location>
</feature>
<feature type="sequence conflict" description="In Ref. 3; BAD96922." evidence="18" ref="3">
    <original>K</original>
    <variation>R</variation>
    <location>
        <position position="18"/>
    </location>
</feature>
<feature type="helix" evidence="30">
    <location>
        <begin position="41"/>
        <end position="43"/>
    </location>
</feature>
<feature type="turn" evidence="30">
    <location>
        <begin position="47"/>
        <end position="49"/>
    </location>
</feature>
<feature type="turn" evidence="31">
    <location>
        <begin position="51"/>
        <end position="53"/>
    </location>
</feature>
<feature type="strand" evidence="30">
    <location>
        <begin position="78"/>
        <end position="83"/>
    </location>
</feature>
<feature type="turn" evidence="33">
    <location>
        <begin position="86"/>
        <end position="88"/>
    </location>
</feature>
<feature type="helix" evidence="30">
    <location>
        <begin position="89"/>
        <end position="94"/>
    </location>
</feature>
<feature type="helix" evidence="30">
    <location>
        <begin position="95"/>
        <end position="97"/>
    </location>
</feature>
<feature type="strand" evidence="30">
    <location>
        <begin position="101"/>
        <end position="108"/>
    </location>
</feature>
<feature type="helix" evidence="30">
    <location>
        <begin position="110"/>
        <end position="125"/>
    </location>
</feature>
<feature type="strand" evidence="32">
    <location>
        <begin position="126"/>
        <end position="128"/>
    </location>
</feature>
<feature type="strand" evidence="30">
    <location>
        <begin position="134"/>
        <end position="138"/>
    </location>
</feature>
<feature type="turn" evidence="30">
    <location>
        <begin position="141"/>
        <end position="143"/>
    </location>
</feature>
<feature type="helix" evidence="30">
    <location>
        <begin position="145"/>
        <end position="148"/>
    </location>
</feature>
<feature type="strand" evidence="30">
    <location>
        <begin position="154"/>
        <end position="161"/>
    </location>
</feature>
<feature type="helix" evidence="31">
    <location>
        <begin position="166"/>
        <end position="168"/>
    </location>
</feature>
<feature type="helix" evidence="31">
    <location>
        <begin position="171"/>
        <end position="173"/>
    </location>
</feature>
<feature type="strand" evidence="34">
    <location>
        <begin position="174"/>
        <end position="176"/>
    </location>
</feature>
<feature type="helix" evidence="30">
    <location>
        <begin position="178"/>
        <end position="187"/>
    </location>
</feature>
<feature type="strand" evidence="30">
    <location>
        <begin position="188"/>
        <end position="199"/>
    </location>
</feature>
<feature type="helix" evidence="30">
    <location>
        <begin position="201"/>
        <end position="212"/>
    </location>
</feature>
<feature type="strand" evidence="30">
    <location>
        <begin position="217"/>
        <end position="220"/>
    </location>
</feature>
<feature type="helix" evidence="30">
    <location>
        <begin position="222"/>
        <end position="225"/>
    </location>
</feature>
<feature type="helix" evidence="30">
    <location>
        <begin position="231"/>
        <end position="233"/>
    </location>
</feature>
<feature type="turn" evidence="30">
    <location>
        <begin position="234"/>
        <end position="236"/>
    </location>
</feature>
<feature type="helix" evidence="30">
    <location>
        <begin position="239"/>
        <end position="246"/>
    </location>
</feature>
<feature type="strand" evidence="30">
    <location>
        <begin position="252"/>
        <end position="258"/>
    </location>
</feature>
<feature type="turn" evidence="30">
    <location>
        <begin position="262"/>
        <end position="264"/>
    </location>
</feature>
<gene>
    <name evidence="1 16 21" type="primary">METTL1</name>
    <name evidence="21" type="synonym">C12orf1</name>
</gene>
<protein>
    <recommendedName>
        <fullName evidence="1">tRNA (guanine-N(7)-)-methyltransferase</fullName>
        <ecNumber evidence="1 8 9 11 12 13">2.1.1.33</ecNumber>
    </recommendedName>
    <alternativeName>
        <fullName evidence="1">Methyltransferase-like protein 1</fullName>
    </alternativeName>
    <alternativeName>
        <fullName evidence="18">mRNA (guanine-N(7)-)-methyltransferase</fullName>
        <ecNumber evidence="7 14">2.1.1.-</ecNumber>
    </alternativeName>
    <alternativeName>
        <fullName evidence="18">miRNA (guanine-N(7)-)-methyltransferase</fullName>
        <ecNumber evidence="6">2.1.1.-</ecNumber>
    </alternativeName>
    <alternativeName>
        <fullName evidence="1">tRNA (guanine(46)-N(7))-methyltransferase</fullName>
    </alternativeName>
    <alternativeName>
        <fullName evidence="1">tRNA(m7G46)-methyltransferase</fullName>
    </alternativeName>
</protein>
<organism>
    <name type="scientific">Homo sapiens</name>
    <name type="common">Human</name>
    <dbReference type="NCBI Taxonomy" id="9606"/>
    <lineage>
        <taxon>Eukaryota</taxon>
        <taxon>Metazoa</taxon>
        <taxon>Chordata</taxon>
        <taxon>Craniata</taxon>
        <taxon>Vertebrata</taxon>
        <taxon>Euteleostomi</taxon>
        <taxon>Mammalia</taxon>
        <taxon>Eutheria</taxon>
        <taxon>Euarchontoglires</taxon>
        <taxon>Primates</taxon>
        <taxon>Haplorrhini</taxon>
        <taxon>Catarrhini</taxon>
        <taxon>Hominidae</taxon>
        <taxon>Homo</taxon>
    </lineage>
</organism>
<keyword id="KW-0002">3D-structure</keyword>
<keyword id="KW-0007">Acetylation</keyword>
<keyword id="KW-0025">Alternative splicing</keyword>
<keyword id="KW-0489">Methyltransferase</keyword>
<keyword id="KW-0539">Nucleus</keyword>
<keyword id="KW-0597">Phosphoprotein</keyword>
<keyword id="KW-1267">Proteomics identification</keyword>
<keyword id="KW-1185">Reference proteome</keyword>
<keyword id="KW-0694">RNA-binding</keyword>
<keyword id="KW-0949">S-adenosyl-L-methionine</keyword>
<keyword id="KW-0808">Transferase</keyword>
<keyword id="KW-0819">tRNA processing</keyword>
<keyword id="KW-0820">tRNA-binding</keyword>
<sequence length="276" mass="31471">MAAETRNVAGAEAPPPQKRYYRQRAHSNPMADHTLRYPVKPEEMDWSELYPEFFAPLTQNQSHDDPKDKKEKRAQAQVEFADIGCGYGGLLVELSPLFPDTLILGLEIRVKVSDYVQDRIRALRAAPAGGFQNIACLRSNAMKHLPNFFYKGQLTKMFFLFPDPHFKRTKHKWRIISPTLLAEYAYVLRVGGLVYTITDVLELHDWMCTHFEEHPLFERVPLEDLSEDPVVGHLGTSTEEGKKVLRNGGKNFPAIFRRIQDPVLQAVTSQTSLPGH</sequence>
<name>TRMB_HUMAN</name>
<accession>Q9UBP6</accession>
<accession>B2RBX1</accession>
<accession>H7BXF2</accession>
<accession>Q14105</accession>
<accession>Q53FS9</accession>